<dbReference type="EC" id="2.5.1.61"/>
<dbReference type="EMBL" id="AE002160">
    <property type="protein sequence ID" value="AAF39408.1"/>
    <property type="molecule type" value="Genomic_DNA"/>
</dbReference>
<dbReference type="PIR" id="E81688">
    <property type="entry name" value="E81688"/>
</dbReference>
<dbReference type="RefSeq" id="WP_010230871.1">
    <property type="nucleotide sequence ID" value="NZ_CP063055.1"/>
</dbReference>
<dbReference type="SMR" id="Q9PK95"/>
<dbReference type="GeneID" id="1245931"/>
<dbReference type="KEGG" id="cmu:TC_0572"/>
<dbReference type="eggNOG" id="COG0181">
    <property type="taxonomic scope" value="Bacteria"/>
</dbReference>
<dbReference type="HOGENOM" id="CLU_019704_2_0_0"/>
<dbReference type="OrthoDB" id="17762at2"/>
<dbReference type="UniPathway" id="UPA00251">
    <property type="reaction ID" value="UER00319"/>
</dbReference>
<dbReference type="Proteomes" id="UP000000800">
    <property type="component" value="Chromosome"/>
</dbReference>
<dbReference type="GO" id="GO:0005737">
    <property type="term" value="C:cytoplasm"/>
    <property type="evidence" value="ECO:0007669"/>
    <property type="project" value="TreeGrafter"/>
</dbReference>
<dbReference type="GO" id="GO:0004418">
    <property type="term" value="F:hydroxymethylbilane synthase activity"/>
    <property type="evidence" value="ECO:0007669"/>
    <property type="project" value="UniProtKB-EC"/>
</dbReference>
<dbReference type="GO" id="GO:0006782">
    <property type="term" value="P:protoporphyrinogen IX biosynthetic process"/>
    <property type="evidence" value="ECO:0007669"/>
    <property type="project" value="UniProtKB-UniPathway"/>
</dbReference>
<dbReference type="Gene3D" id="3.40.190.10">
    <property type="entry name" value="Periplasmic binding protein-like II"/>
    <property type="match status" value="2"/>
</dbReference>
<dbReference type="InterPro" id="IPR000860">
    <property type="entry name" value="HemC"/>
</dbReference>
<dbReference type="InterPro" id="IPR022417">
    <property type="entry name" value="Porphobilin_deaminase_N"/>
</dbReference>
<dbReference type="NCBIfam" id="NF002202">
    <property type="entry name" value="PRK01066.1"/>
    <property type="match status" value="1"/>
</dbReference>
<dbReference type="PANTHER" id="PTHR11557">
    <property type="entry name" value="PORPHOBILINOGEN DEAMINASE"/>
    <property type="match status" value="1"/>
</dbReference>
<dbReference type="PANTHER" id="PTHR11557:SF0">
    <property type="entry name" value="PORPHOBILINOGEN DEAMINASE"/>
    <property type="match status" value="1"/>
</dbReference>
<dbReference type="Pfam" id="PF01379">
    <property type="entry name" value="Porphobil_deam"/>
    <property type="match status" value="1"/>
</dbReference>
<dbReference type="PRINTS" id="PR00151">
    <property type="entry name" value="PORPHBDMNASE"/>
</dbReference>
<dbReference type="SUPFAM" id="SSF53850">
    <property type="entry name" value="Periplasmic binding protein-like II"/>
    <property type="match status" value="1"/>
</dbReference>
<feature type="chain" id="PRO_0000143017" description="Probable porphobilinogen deaminase">
    <location>
        <begin position="1"/>
        <end position="242"/>
    </location>
</feature>
<evidence type="ECO:0000250" key="1"/>
<evidence type="ECO:0000305" key="2"/>
<sequence length="242" mass="27316">MLSAYYNDPFLSDFCLGKIPLRLASRKSPLAVLQAHECLRRLQTFFPRLWGQVITETTQGDLDQHTPLHSVENTGFFTDDIDFLVQSGKCDLAIHSAKDLPEKPKARVIAITASIDPRDILVFQEKYLLQPFPSRLRIGCSSDRRRALISSLYPSAVITDIRGTIQTRLALLDQQKFDAIVMANAAVSRLGLRLPCTVVLPPPYHPFQGRLAITSCHHIASWEKLFLTCKITENINLLHFFS</sequence>
<comment type="function">
    <text evidence="1">Tetrapolymerization of the monopyrrole PBG into the hydroxymethylbilane pre-uroporphyrinogen in several discrete steps.</text>
</comment>
<comment type="catalytic activity">
    <reaction>
        <text>4 porphobilinogen + H2O = hydroxymethylbilane + 4 NH4(+)</text>
        <dbReference type="Rhea" id="RHEA:13185"/>
        <dbReference type="ChEBI" id="CHEBI:15377"/>
        <dbReference type="ChEBI" id="CHEBI:28938"/>
        <dbReference type="ChEBI" id="CHEBI:57845"/>
        <dbReference type="ChEBI" id="CHEBI:58126"/>
        <dbReference type="EC" id="2.5.1.61"/>
    </reaction>
</comment>
<comment type="pathway">
    <text>Porphyrin-containing compound metabolism; protoporphyrin-IX biosynthesis; coproporphyrinogen-III from 5-aminolevulinate: step 2/4.</text>
</comment>
<comment type="similarity">
    <text evidence="2">Belongs to the HMBS family.</text>
</comment>
<comment type="caution">
    <text evidence="2">This sequence may not function as a hydroxymethylbilane synthase because it lacks the cysteine residue necessary for attachment of the dipyrromethane cofactor.</text>
</comment>
<name>HEM3_CHLMU</name>
<accession>Q9PK95</accession>
<keyword id="KW-0627">Porphyrin biosynthesis</keyword>
<keyword id="KW-0808">Transferase</keyword>
<proteinExistence type="inferred from homology"/>
<protein>
    <recommendedName>
        <fullName>Probable porphobilinogen deaminase</fullName>
        <shortName>PBG</shortName>
        <ecNumber>2.5.1.61</ecNumber>
    </recommendedName>
    <alternativeName>
        <fullName>Hydroxymethylbilane synthase</fullName>
        <shortName>HMBS</shortName>
    </alternativeName>
    <alternativeName>
        <fullName>Pre-uroporphyrinogen synthase</fullName>
    </alternativeName>
</protein>
<organism>
    <name type="scientific">Chlamydia muridarum (strain MoPn / Nigg)</name>
    <dbReference type="NCBI Taxonomy" id="243161"/>
    <lineage>
        <taxon>Bacteria</taxon>
        <taxon>Pseudomonadati</taxon>
        <taxon>Chlamydiota</taxon>
        <taxon>Chlamydiia</taxon>
        <taxon>Chlamydiales</taxon>
        <taxon>Chlamydiaceae</taxon>
        <taxon>Chlamydia/Chlamydophila group</taxon>
        <taxon>Chlamydia</taxon>
    </lineage>
</organism>
<gene>
    <name type="primary">hemC</name>
    <name type="ordered locus">TC_0572</name>
</gene>
<reference key="1">
    <citation type="journal article" date="2000" name="Nucleic Acids Res.">
        <title>Genome sequences of Chlamydia trachomatis MoPn and Chlamydia pneumoniae AR39.</title>
        <authorList>
            <person name="Read T.D."/>
            <person name="Brunham R.C."/>
            <person name="Shen C."/>
            <person name="Gill S.R."/>
            <person name="Heidelberg J.F."/>
            <person name="White O."/>
            <person name="Hickey E.K."/>
            <person name="Peterson J.D."/>
            <person name="Utterback T.R."/>
            <person name="Berry K.J."/>
            <person name="Bass S."/>
            <person name="Linher K.D."/>
            <person name="Weidman J.F."/>
            <person name="Khouri H.M."/>
            <person name="Craven B."/>
            <person name="Bowman C."/>
            <person name="Dodson R.J."/>
            <person name="Gwinn M.L."/>
            <person name="Nelson W.C."/>
            <person name="DeBoy R.T."/>
            <person name="Kolonay J.F."/>
            <person name="McClarty G."/>
            <person name="Salzberg S.L."/>
            <person name="Eisen J.A."/>
            <person name="Fraser C.M."/>
        </authorList>
    </citation>
    <scope>NUCLEOTIDE SEQUENCE [LARGE SCALE GENOMIC DNA]</scope>
    <source>
        <strain>MoPn / Nigg</strain>
    </source>
</reference>